<gene>
    <name evidence="1" type="primary">rsmG</name>
    <name type="synonym">gidB</name>
    <name type="ordered locus">ML2708</name>
</gene>
<comment type="function">
    <text evidence="1">Specifically methylates the N7 position of guanine in position 518 of 16S rRNA.</text>
</comment>
<comment type="subcellular location">
    <subcellularLocation>
        <location evidence="1">Cytoplasm</location>
    </subcellularLocation>
</comment>
<comment type="similarity">
    <text evidence="1">Belongs to the methyltransferase superfamily. RNA methyltransferase RsmG family.</text>
</comment>
<comment type="sequence caution" evidence="2">
    <conflict type="erroneous initiation">
        <sequence resource="EMBL-CDS" id="CAC32240"/>
    </conflict>
</comment>
<name>RSMG_MYCLE</name>
<organism>
    <name type="scientific">Mycobacterium leprae (strain TN)</name>
    <dbReference type="NCBI Taxonomy" id="272631"/>
    <lineage>
        <taxon>Bacteria</taxon>
        <taxon>Bacillati</taxon>
        <taxon>Actinomycetota</taxon>
        <taxon>Actinomycetes</taxon>
        <taxon>Mycobacteriales</taxon>
        <taxon>Mycobacteriaceae</taxon>
        <taxon>Mycobacterium</taxon>
    </lineage>
</organism>
<feature type="chain" id="PRO_0000184281" description="Ribosomal RNA small subunit methyltransferase G">
    <location>
        <begin position="1"/>
        <end position="245"/>
    </location>
</feature>
<feature type="binding site" evidence="1">
    <location>
        <position position="90"/>
    </location>
    <ligand>
        <name>S-adenosyl-L-methionine</name>
        <dbReference type="ChEBI" id="CHEBI:59789"/>
    </ligand>
</feature>
<feature type="binding site" evidence="1">
    <location>
        <position position="95"/>
    </location>
    <ligand>
        <name>S-adenosyl-L-methionine</name>
        <dbReference type="ChEBI" id="CHEBI:59789"/>
    </ligand>
</feature>
<feature type="binding site" evidence="1">
    <location>
        <begin position="140"/>
        <end position="141"/>
    </location>
    <ligand>
        <name>S-adenosyl-L-methionine</name>
        <dbReference type="ChEBI" id="CHEBI:59789"/>
    </ligand>
</feature>
<feature type="binding site" evidence="1">
    <location>
        <position position="158"/>
    </location>
    <ligand>
        <name>S-adenosyl-L-methionine</name>
        <dbReference type="ChEBI" id="CHEBI:59789"/>
    </ligand>
</feature>
<feature type="sequence conflict" description="In Ref. 1." evidence="2" ref="1">
    <original>RCGQQMRHKPARVGDRKTQ</original>
    <variation>DADSRCGTNQRVWGTGKHN</variation>
    <location>
        <begin position="227"/>
        <end position="245"/>
    </location>
</feature>
<protein>
    <recommendedName>
        <fullName evidence="1">Ribosomal RNA small subunit methyltransferase G</fullName>
        <ecNumber evidence="1">2.1.1.-</ecNumber>
    </recommendedName>
    <alternativeName>
        <fullName evidence="1">16S rRNA 7-methylguanosine methyltransferase</fullName>
        <shortName evidence="1">16S rRNA m7G methyltransferase</shortName>
    </alternativeName>
    <alternativeName>
        <fullName>Glucose-inhibited division protein B</fullName>
    </alternativeName>
</protein>
<accession>Q50203</accession>
<proteinExistence type="inferred from homology"/>
<reference key="1">
    <citation type="journal article" date="1996" name="Microbiology">
        <title>Gene arrangement and organization in an approximately 76 kb fragment encompassing the oriC region of the chromosome of Mycobacterium leprae.</title>
        <authorList>
            <person name="Fsihi H."/>
            <person name="de Rossi E."/>
            <person name="Salazar L."/>
            <person name="Cantoni R."/>
            <person name="Labo M."/>
            <person name="Riccardi G."/>
            <person name="Takiff H.E."/>
            <person name="Eiglmeier K."/>
            <person name="Bergh S."/>
            <person name="Cole S.T."/>
        </authorList>
    </citation>
    <scope>NUCLEOTIDE SEQUENCE [GENOMIC DNA]</scope>
</reference>
<reference key="2">
    <citation type="journal article" date="2001" name="Nature">
        <title>Massive gene decay in the leprosy bacillus.</title>
        <authorList>
            <person name="Cole S.T."/>
            <person name="Eiglmeier K."/>
            <person name="Parkhill J."/>
            <person name="James K.D."/>
            <person name="Thomson N.R."/>
            <person name="Wheeler P.R."/>
            <person name="Honore N."/>
            <person name="Garnier T."/>
            <person name="Churcher C.M."/>
            <person name="Harris D.E."/>
            <person name="Mungall K.L."/>
            <person name="Basham D."/>
            <person name="Brown D."/>
            <person name="Chillingworth T."/>
            <person name="Connor R."/>
            <person name="Davies R.M."/>
            <person name="Devlin K."/>
            <person name="Duthoy S."/>
            <person name="Feltwell T."/>
            <person name="Fraser A."/>
            <person name="Hamlin N."/>
            <person name="Holroyd S."/>
            <person name="Hornsby T."/>
            <person name="Jagels K."/>
            <person name="Lacroix C."/>
            <person name="Maclean J."/>
            <person name="Moule S."/>
            <person name="Murphy L.D."/>
            <person name="Oliver K."/>
            <person name="Quail M.A."/>
            <person name="Rajandream M.A."/>
            <person name="Rutherford K.M."/>
            <person name="Rutter S."/>
            <person name="Seeger K."/>
            <person name="Simon S."/>
            <person name="Simmonds M."/>
            <person name="Skelton J."/>
            <person name="Squares R."/>
            <person name="Squares S."/>
            <person name="Stevens K."/>
            <person name="Taylor K."/>
            <person name="Whitehead S."/>
            <person name="Woodward J.R."/>
            <person name="Barrell B.G."/>
        </authorList>
    </citation>
    <scope>NUCLEOTIDE SEQUENCE [LARGE SCALE GENOMIC DNA]</scope>
    <source>
        <strain>TN</strain>
    </source>
</reference>
<evidence type="ECO:0000255" key="1">
    <source>
        <dbReference type="HAMAP-Rule" id="MF_00074"/>
    </source>
</evidence>
<evidence type="ECO:0000305" key="2"/>
<dbReference type="EC" id="2.1.1.-" evidence="1"/>
<dbReference type="EMBL" id="L39923">
    <property type="protein sequence ID" value="AAB53136.1"/>
    <property type="molecule type" value="Genomic_DNA"/>
</dbReference>
<dbReference type="EMBL" id="AL583926">
    <property type="protein sequence ID" value="CAC32240.1"/>
    <property type="status" value="ALT_INIT"/>
    <property type="molecule type" value="Genomic_DNA"/>
</dbReference>
<dbReference type="PIR" id="B87248">
    <property type="entry name" value="B87248"/>
</dbReference>
<dbReference type="RefSeq" id="WP_010909047.1">
    <property type="nucleotide sequence ID" value="NC_002677.1"/>
</dbReference>
<dbReference type="SMR" id="Q50203"/>
<dbReference type="STRING" id="272631.gene:17576574"/>
<dbReference type="KEGG" id="mle:ML2708"/>
<dbReference type="Leproma" id="ML2708"/>
<dbReference type="eggNOG" id="COG0357">
    <property type="taxonomic scope" value="Bacteria"/>
</dbReference>
<dbReference type="HOGENOM" id="CLU_065341_5_0_11"/>
<dbReference type="Proteomes" id="UP000000806">
    <property type="component" value="Chromosome"/>
</dbReference>
<dbReference type="GO" id="GO:0005829">
    <property type="term" value="C:cytosol"/>
    <property type="evidence" value="ECO:0007669"/>
    <property type="project" value="TreeGrafter"/>
</dbReference>
<dbReference type="GO" id="GO:0070043">
    <property type="term" value="F:rRNA (guanine-N7-)-methyltransferase activity"/>
    <property type="evidence" value="ECO:0007669"/>
    <property type="project" value="UniProtKB-UniRule"/>
</dbReference>
<dbReference type="CDD" id="cd02440">
    <property type="entry name" value="AdoMet_MTases"/>
    <property type="match status" value="1"/>
</dbReference>
<dbReference type="Gene3D" id="3.40.50.150">
    <property type="entry name" value="Vaccinia Virus protein VP39"/>
    <property type="match status" value="1"/>
</dbReference>
<dbReference type="HAMAP" id="MF_00074">
    <property type="entry name" value="16SrRNA_methyltr_G"/>
    <property type="match status" value="1"/>
</dbReference>
<dbReference type="InterPro" id="IPR003682">
    <property type="entry name" value="rRNA_ssu_MeTfrase_G"/>
</dbReference>
<dbReference type="InterPro" id="IPR029063">
    <property type="entry name" value="SAM-dependent_MTases_sf"/>
</dbReference>
<dbReference type="NCBIfam" id="TIGR00138">
    <property type="entry name" value="rsmG_gidB"/>
    <property type="match status" value="1"/>
</dbReference>
<dbReference type="PANTHER" id="PTHR31760">
    <property type="entry name" value="S-ADENOSYL-L-METHIONINE-DEPENDENT METHYLTRANSFERASES SUPERFAMILY PROTEIN"/>
    <property type="match status" value="1"/>
</dbReference>
<dbReference type="PANTHER" id="PTHR31760:SF0">
    <property type="entry name" value="S-ADENOSYL-L-METHIONINE-DEPENDENT METHYLTRANSFERASES SUPERFAMILY PROTEIN"/>
    <property type="match status" value="1"/>
</dbReference>
<dbReference type="Pfam" id="PF02527">
    <property type="entry name" value="GidB"/>
    <property type="match status" value="1"/>
</dbReference>
<dbReference type="SUPFAM" id="SSF53335">
    <property type="entry name" value="S-adenosyl-L-methionine-dependent methyltransferases"/>
    <property type="match status" value="1"/>
</dbReference>
<keyword id="KW-0963">Cytoplasm</keyword>
<keyword id="KW-0489">Methyltransferase</keyword>
<keyword id="KW-1185">Reference proteome</keyword>
<keyword id="KW-0698">rRNA processing</keyword>
<keyword id="KW-0949">S-adenosyl-L-methionine</keyword>
<keyword id="KW-0808">Transferase</keyword>
<sequence length="245" mass="27044">MKHVGSYEELASFTSVKGNLGFDTVFEAVFMIFGPRLNIAQRYVDLLANTGIERGLLGPHEANRLWDRHLLNSAVVAELLDPGDRVVDIGSGAGLPGLPLAIARPDLQVVLLEPLLRRVTFLREVVAELGLDVEVVRGRAEELWVRDRIGERDVAVSRAVAALDKLTKWSIPLLRPGGQILAIKGEHVFDEIHQHRRVMASLGAVDVMVVVCGANYLCRPVTVVLTRCGQQMRHKPARVGDRKTQ</sequence>